<evidence type="ECO:0000255" key="1">
    <source>
        <dbReference type="HAMAP-Rule" id="MF_01864"/>
    </source>
</evidence>
<evidence type="ECO:0000255" key="2">
    <source>
        <dbReference type="PROSITE-ProRule" id="PRU01266"/>
    </source>
</evidence>
<accession>A5IJD4</accession>
<reference key="1">
    <citation type="submission" date="2007-05" db="EMBL/GenBank/DDBJ databases">
        <title>Complete sequence of Thermotoga petrophila RKU-1.</title>
        <authorList>
            <consortium name="US DOE Joint Genome Institute"/>
            <person name="Copeland A."/>
            <person name="Lucas S."/>
            <person name="Lapidus A."/>
            <person name="Barry K."/>
            <person name="Glavina del Rio T."/>
            <person name="Dalin E."/>
            <person name="Tice H."/>
            <person name="Pitluck S."/>
            <person name="Sims D."/>
            <person name="Brettin T."/>
            <person name="Bruce D."/>
            <person name="Detter J.C."/>
            <person name="Han C."/>
            <person name="Tapia R."/>
            <person name="Schmutz J."/>
            <person name="Larimer F."/>
            <person name="Land M."/>
            <person name="Hauser L."/>
            <person name="Kyrpides N."/>
            <person name="Mikhailova N."/>
            <person name="Nelson K."/>
            <person name="Gogarten J.P."/>
            <person name="Noll K."/>
            <person name="Richardson P."/>
        </authorList>
    </citation>
    <scope>NUCLEOTIDE SEQUENCE [LARGE SCALE GENOMIC DNA]</scope>
    <source>
        <strain>ATCC BAA-488 / DSM 13995 / JCM 10881 / RKU-1</strain>
    </source>
</reference>
<organism>
    <name type="scientific">Thermotoga petrophila (strain ATCC BAA-488 / DSM 13995 / JCM 10881 / RKU-1)</name>
    <dbReference type="NCBI Taxonomy" id="390874"/>
    <lineage>
        <taxon>Bacteria</taxon>
        <taxon>Thermotogati</taxon>
        <taxon>Thermotogota</taxon>
        <taxon>Thermotogae</taxon>
        <taxon>Thermotogales</taxon>
        <taxon>Thermotogaceae</taxon>
        <taxon>Thermotoga</taxon>
    </lineage>
</organism>
<protein>
    <recommendedName>
        <fullName evidence="1">tRNA-2-methylthio-N(6)-dimethylallyladenosine synthase</fullName>
        <ecNumber evidence="1">2.8.4.3</ecNumber>
    </recommendedName>
    <alternativeName>
        <fullName evidence="1">(Dimethylallyl)adenosine tRNA methylthiotransferase MiaB</fullName>
    </alternativeName>
    <alternativeName>
        <fullName evidence="1">tRNA-i(6)A37 methylthiotransferase</fullName>
    </alternativeName>
</protein>
<name>MIAB_THEP1</name>
<keyword id="KW-0004">4Fe-4S</keyword>
<keyword id="KW-0963">Cytoplasm</keyword>
<keyword id="KW-0408">Iron</keyword>
<keyword id="KW-0411">Iron-sulfur</keyword>
<keyword id="KW-0479">Metal-binding</keyword>
<keyword id="KW-0949">S-adenosyl-L-methionine</keyword>
<keyword id="KW-0808">Transferase</keyword>
<keyword id="KW-0819">tRNA processing</keyword>
<dbReference type="EC" id="2.8.4.3" evidence="1"/>
<dbReference type="EMBL" id="CP000702">
    <property type="protein sequence ID" value="ABQ46307.1"/>
    <property type="molecule type" value="Genomic_DNA"/>
</dbReference>
<dbReference type="RefSeq" id="WP_011942945.1">
    <property type="nucleotide sequence ID" value="NC_009486.1"/>
</dbReference>
<dbReference type="SMR" id="A5IJD4"/>
<dbReference type="STRING" id="390874.Tpet_0278"/>
<dbReference type="KEGG" id="tpt:Tpet_0278"/>
<dbReference type="eggNOG" id="COG0621">
    <property type="taxonomic scope" value="Bacteria"/>
</dbReference>
<dbReference type="HOGENOM" id="CLU_018697_2_2_0"/>
<dbReference type="Proteomes" id="UP000006558">
    <property type="component" value="Chromosome"/>
</dbReference>
<dbReference type="GO" id="GO:0005829">
    <property type="term" value="C:cytosol"/>
    <property type="evidence" value="ECO:0007669"/>
    <property type="project" value="TreeGrafter"/>
</dbReference>
<dbReference type="GO" id="GO:0051539">
    <property type="term" value="F:4 iron, 4 sulfur cluster binding"/>
    <property type="evidence" value="ECO:0007669"/>
    <property type="project" value="UniProtKB-UniRule"/>
</dbReference>
<dbReference type="GO" id="GO:0046872">
    <property type="term" value="F:metal ion binding"/>
    <property type="evidence" value="ECO:0007669"/>
    <property type="project" value="UniProtKB-KW"/>
</dbReference>
<dbReference type="GO" id="GO:0035597">
    <property type="term" value="F:N6-isopentenyladenosine methylthiotransferase activity"/>
    <property type="evidence" value="ECO:0007669"/>
    <property type="project" value="TreeGrafter"/>
</dbReference>
<dbReference type="CDD" id="cd01335">
    <property type="entry name" value="Radical_SAM"/>
    <property type="match status" value="1"/>
</dbReference>
<dbReference type="FunFam" id="3.40.50.12160:FF:000003">
    <property type="entry name" value="CDK5 regulatory subunit-associated protein 1"/>
    <property type="match status" value="1"/>
</dbReference>
<dbReference type="FunFam" id="3.80.30.20:FF:000001">
    <property type="entry name" value="tRNA-2-methylthio-N(6)-dimethylallyladenosine synthase 2"/>
    <property type="match status" value="1"/>
</dbReference>
<dbReference type="Gene3D" id="3.40.50.12160">
    <property type="entry name" value="Methylthiotransferase, N-terminal domain"/>
    <property type="match status" value="1"/>
</dbReference>
<dbReference type="Gene3D" id="3.80.30.20">
    <property type="entry name" value="tm_1862 like domain"/>
    <property type="match status" value="1"/>
</dbReference>
<dbReference type="HAMAP" id="MF_01864">
    <property type="entry name" value="tRNA_metthiotr_MiaB"/>
    <property type="match status" value="1"/>
</dbReference>
<dbReference type="InterPro" id="IPR006638">
    <property type="entry name" value="Elp3/MiaA/NifB-like_rSAM"/>
</dbReference>
<dbReference type="InterPro" id="IPR005839">
    <property type="entry name" value="Methylthiotransferase"/>
</dbReference>
<dbReference type="InterPro" id="IPR020612">
    <property type="entry name" value="Methylthiotransferase_CS"/>
</dbReference>
<dbReference type="InterPro" id="IPR013848">
    <property type="entry name" value="Methylthiotransferase_N"/>
</dbReference>
<dbReference type="InterPro" id="IPR038135">
    <property type="entry name" value="Methylthiotransferase_N_sf"/>
</dbReference>
<dbReference type="InterPro" id="IPR006463">
    <property type="entry name" value="MiaB_methiolase"/>
</dbReference>
<dbReference type="InterPro" id="IPR007197">
    <property type="entry name" value="rSAM"/>
</dbReference>
<dbReference type="InterPro" id="IPR023404">
    <property type="entry name" value="rSAM_horseshoe"/>
</dbReference>
<dbReference type="InterPro" id="IPR002792">
    <property type="entry name" value="TRAM_dom"/>
</dbReference>
<dbReference type="NCBIfam" id="TIGR01574">
    <property type="entry name" value="miaB-methiolase"/>
    <property type="match status" value="1"/>
</dbReference>
<dbReference type="NCBIfam" id="TIGR00089">
    <property type="entry name" value="MiaB/RimO family radical SAM methylthiotransferase"/>
    <property type="match status" value="1"/>
</dbReference>
<dbReference type="PANTHER" id="PTHR43020">
    <property type="entry name" value="CDK5 REGULATORY SUBUNIT-ASSOCIATED PROTEIN 1"/>
    <property type="match status" value="1"/>
</dbReference>
<dbReference type="PANTHER" id="PTHR43020:SF2">
    <property type="entry name" value="MITOCHONDRIAL TRNA METHYLTHIOTRANSFERASE CDK5RAP1"/>
    <property type="match status" value="1"/>
</dbReference>
<dbReference type="Pfam" id="PF04055">
    <property type="entry name" value="Radical_SAM"/>
    <property type="match status" value="1"/>
</dbReference>
<dbReference type="Pfam" id="PF01938">
    <property type="entry name" value="TRAM"/>
    <property type="match status" value="1"/>
</dbReference>
<dbReference type="Pfam" id="PF00919">
    <property type="entry name" value="UPF0004"/>
    <property type="match status" value="1"/>
</dbReference>
<dbReference type="SFLD" id="SFLDF00273">
    <property type="entry name" value="(dimethylallyl)adenosine_tRNA"/>
    <property type="match status" value="1"/>
</dbReference>
<dbReference type="SFLD" id="SFLDG01082">
    <property type="entry name" value="B12-binding_domain_containing"/>
    <property type="match status" value="1"/>
</dbReference>
<dbReference type="SFLD" id="SFLDG01061">
    <property type="entry name" value="methylthiotransferase"/>
    <property type="match status" value="1"/>
</dbReference>
<dbReference type="SMART" id="SM00729">
    <property type="entry name" value="Elp3"/>
    <property type="match status" value="1"/>
</dbReference>
<dbReference type="SUPFAM" id="SSF102114">
    <property type="entry name" value="Radical SAM enzymes"/>
    <property type="match status" value="1"/>
</dbReference>
<dbReference type="PROSITE" id="PS51449">
    <property type="entry name" value="MTTASE_N"/>
    <property type="match status" value="1"/>
</dbReference>
<dbReference type="PROSITE" id="PS01278">
    <property type="entry name" value="MTTASE_RADICAL"/>
    <property type="match status" value="1"/>
</dbReference>
<dbReference type="PROSITE" id="PS51918">
    <property type="entry name" value="RADICAL_SAM"/>
    <property type="match status" value="1"/>
</dbReference>
<dbReference type="PROSITE" id="PS50926">
    <property type="entry name" value="TRAM"/>
    <property type="match status" value="1"/>
</dbReference>
<comment type="function">
    <text evidence="1">Catalyzes the methylthiolation of N6-(dimethylallyl)adenosine (i(6)A), leading to the formation of 2-methylthio-N6-(dimethylallyl)adenosine (ms(2)i(6)A) at position 37 in tRNAs that read codons beginning with uridine.</text>
</comment>
<comment type="catalytic activity">
    <reaction evidence="1">
        <text>N(6)-dimethylallyladenosine(37) in tRNA + (sulfur carrier)-SH + AH2 + 2 S-adenosyl-L-methionine = 2-methylsulfanyl-N(6)-dimethylallyladenosine(37) in tRNA + (sulfur carrier)-H + 5'-deoxyadenosine + L-methionine + A + S-adenosyl-L-homocysteine + 2 H(+)</text>
        <dbReference type="Rhea" id="RHEA:37067"/>
        <dbReference type="Rhea" id="RHEA-COMP:10375"/>
        <dbReference type="Rhea" id="RHEA-COMP:10376"/>
        <dbReference type="Rhea" id="RHEA-COMP:14737"/>
        <dbReference type="Rhea" id="RHEA-COMP:14739"/>
        <dbReference type="ChEBI" id="CHEBI:13193"/>
        <dbReference type="ChEBI" id="CHEBI:15378"/>
        <dbReference type="ChEBI" id="CHEBI:17319"/>
        <dbReference type="ChEBI" id="CHEBI:17499"/>
        <dbReference type="ChEBI" id="CHEBI:29917"/>
        <dbReference type="ChEBI" id="CHEBI:57844"/>
        <dbReference type="ChEBI" id="CHEBI:57856"/>
        <dbReference type="ChEBI" id="CHEBI:59789"/>
        <dbReference type="ChEBI" id="CHEBI:64428"/>
        <dbReference type="ChEBI" id="CHEBI:74415"/>
        <dbReference type="ChEBI" id="CHEBI:74417"/>
        <dbReference type="EC" id="2.8.4.3"/>
    </reaction>
</comment>
<comment type="cofactor">
    <cofactor evidence="1">
        <name>[4Fe-4S] cluster</name>
        <dbReference type="ChEBI" id="CHEBI:49883"/>
    </cofactor>
    <text evidence="1">Binds 2 [4Fe-4S] clusters. One cluster is coordinated with 3 cysteines and an exchangeable S-adenosyl-L-methionine.</text>
</comment>
<comment type="subunit">
    <text evidence="1">Monomer.</text>
</comment>
<comment type="subcellular location">
    <subcellularLocation>
        <location evidence="1">Cytoplasm</location>
    </subcellularLocation>
</comment>
<comment type="similarity">
    <text evidence="1">Belongs to the methylthiotransferase family. MiaB subfamily.</text>
</comment>
<proteinExistence type="inferred from homology"/>
<gene>
    <name evidence="1" type="primary">miaB</name>
    <name type="ordered locus">Tpet_0278</name>
</gene>
<feature type="chain" id="PRO_0000374615" description="tRNA-2-methylthio-N(6)-dimethylallyladenosine synthase">
    <location>
        <begin position="1"/>
        <end position="443"/>
    </location>
</feature>
<feature type="domain" description="MTTase N-terminal" evidence="1">
    <location>
        <begin position="1"/>
        <end position="114"/>
    </location>
</feature>
<feature type="domain" description="Radical SAM core" evidence="2">
    <location>
        <begin position="136"/>
        <end position="367"/>
    </location>
</feature>
<feature type="domain" description="TRAM" evidence="1">
    <location>
        <begin position="370"/>
        <end position="431"/>
    </location>
</feature>
<feature type="binding site" evidence="1">
    <location>
        <position position="10"/>
    </location>
    <ligand>
        <name>[4Fe-4S] cluster</name>
        <dbReference type="ChEBI" id="CHEBI:49883"/>
        <label>1</label>
    </ligand>
</feature>
<feature type="binding site" evidence="1">
    <location>
        <position position="46"/>
    </location>
    <ligand>
        <name>[4Fe-4S] cluster</name>
        <dbReference type="ChEBI" id="CHEBI:49883"/>
        <label>1</label>
    </ligand>
</feature>
<feature type="binding site" evidence="1">
    <location>
        <position position="79"/>
    </location>
    <ligand>
        <name>[4Fe-4S] cluster</name>
        <dbReference type="ChEBI" id="CHEBI:49883"/>
        <label>1</label>
    </ligand>
</feature>
<feature type="binding site" evidence="1">
    <location>
        <position position="150"/>
    </location>
    <ligand>
        <name>[4Fe-4S] cluster</name>
        <dbReference type="ChEBI" id="CHEBI:49883"/>
        <label>2</label>
        <note>4Fe-4S-S-AdoMet</note>
    </ligand>
</feature>
<feature type="binding site" evidence="1">
    <location>
        <position position="154"/>
    </location>
    <ligand>
        <name>[4Fe-4S] cluster</name>
        <dbReference type="ChEBI" id="CHEBI:49883"/>
        <label>2</label>
        <note>4Fe-4S-S-AdoMet</note>
    </ligand>
</feature>
<feature type="binding site" evidence="1">
    <location>
        <position position="157"/>
    </location>
    <ligand>
        <name>[4Fe-4S] cluster</name>
        <dbReference type="ChEBI" id="CHEBI:49883"/>
        <label>2</label>
        <note>4Fe-4S-S-AdoMet</note>
    </ligand>
</feature>
<sequence>MRFYIKTFGCQMNENDSETMAGLLMKEGFTPASAPEEADVVIINTCAVRRKSEEKAYSELGQMLKIKRKRKLVVGVAGCVAEKEREKLLERGADFVLGTRAVLKVTEAVKRALQGEKVALFEDHLDEYTHELPRIRSSKHHAWVTIIFGCDRFCTYCIVPYTRGREKSRPMEDILEEVRELAKQGYREVTFLGQNVDAYGKDLKDGSSLAKLLEEASKIEGIERIWFLTSYPTDFSDELIEVIARNPKVAKSVHLPVQSGSNRILKLMNRSYTKEEYLALLERIRSKVPDVAISSDIIVGFPTETEEDFMETIDLVEKAQFERLNLAIYSPRKGTVAWKHYKDEVPYEEKVRRMQFLMNLQKRINRKLNERYKGKTVRVIVEAQAKNGLFYGRDIRNKIIAFEGEEWMIGRFADVKIEKITAGPLYGKVVWIEETPSPVSTDK</sequence>